<proteinExistence type="inferred from homology"/>
<gene>
    <name type="primary">nsa2</name>
    <name type="ORF">NFIA_069050</name>
</gene>
<keyword id="KW-0539">Nucleus</keyword>
<keyword id="KW-1185">Reference proteome</keyword>
<keyword id="KW-0687">Ribonucleoprotein</keyword>
<keyword id="KW-0690">Ribosome biogenesis</keyword>
<keyword id="KW-0698">rRNA processing</keyword>
<comment type="function">
    <text evidence="1">Involved in the biogenesis of the 60S ribosomal subunit. May play a part in the quality control of pre-60S particles (By similarity).</text>
</comment>
<comment type="subunit">
    <text evidence="2">Component of the pre-66S ribosomal particle. Interacts with nop7 and rrp1. Interacts with rsa4 (via WD repeats).</text>
</comment>
<comment type="subcellular location">
    <subcellularLocation>
        <location evidence="1">Nucleus</location>
        <location evidence="1">Nucleolus</location>
    </subcellularLocation>
</comment>
<comment type="similarity">
    <text evidence="5">Belongs to the eukaryotic ribosomal protein eS8 family. Ribosome biogenesis protein NSA2 subfamily.</text>
</comment>
<comment type="sequence caution" evidence="5">
    <conflict type="erroneous gene model prediction">
        <sequence resource="EMBL-CDS" id="EAW21734"/>
    </conflict>
</comment>
<protein>
    <recommendedName>
        <fullName>Ribosome biogenesis protein nsa2</fullName>
    </recommendedName>
</protein>
<sequence length="271" mass="31027">MHRLLRGGHLQSFHEYIERWQKQHGKRLDHDERVRKRQARESHKQSQDAQNLRGLRAKLYQQKRHAEKIQMRKRIKAQEEKNVKSSAPDEPSKTPLPQYLLDRSQATNAKALSSAIKDKRAEKAAKFAVPLPKVKGISEEEMFKVVNTGKKTHKKSWKRMITKPTFVGSDFTRRPVKYERFIRPMGLRYKKANVTHPELGVTVQLPILGVKKNPQNPLYTQLGVLTKGTIIEVNVSELGLVTTSGKVVWGKYAQITNTPENDGTVNAVLLV</sequence>
<feature type="chain" id="PRO_0000320420" description="Ribosome biogenesis protein nsa2">
    <location>
        <begin position="1"/>
        <end position="271"/>
    </location>
</feature>
<feature type="region of interest" description="Disordered" evidence="4">
    <location>
        <begin position="22"/>
        <end position="97"/>
    </location>
</feature>
<feature type="short sequence motif" description="Nuclear localization signal 1" evidence="3">
    <location>
        <begin position="25"/>
        <end position="32"/>
    </location>
</feature>
<feature type="short sequence motif" description="Nuclear localization signal 2" evidence="3">
    <location>
        <begin position="62"/>
        <end position="69"/>
    </location>
</feature>
<feature type="compositionally biased region" description="Basic and acidic residues" evidence="4">
    <location>
        <begin position="22"/>
        <end position="46"/>
    </location>
</feature>
<feature type="compositionally biased region" description="Basic residues" evidence="4">
    <location>
        <begin position="61"/>
        <end position="75"/>
    </location>
</feature>
<evidence type="ECO:0000250" key="1"/>
<evidence type="ECO:0000250" key="2">
    <source>
        <dbReference type="UniProtKB" id="P40078"/>
    </source>
</evidence>
<evidence type="ECO:0000255" key="3">
    <source>
        <dbReference type="PROSITE-ProRule" id="PRU00768"/>
    </source>
</evidence>
<evidence type="ECO:0000256" key="4">
    <source>
        <dbReference type="SAM" id="MobiDB-lite"/>
    </source>
</evidence>
<evidence type="ECO:0000305" key="5"/>
<name>NSA2_NEOFI</name>
<accession>A1D7P0</accession>
<reference key="1">
    <citation type="journal article" date="2008" name="PLoS Genet.">
        <title>Genomic islands in the pathogenic filamentous fungus Aspergillus fumigatus.</title>
        <authorList>
            <person name="Fedorova N.D."/>
            <person name="Khaldi N."/>
            <person name="Joardar V.S."/>
            <person name="Maiti R."/>
            <person name="Amedeo P."/>
            <person name="Anderson M.J."/>
            <person name="Crabtree J."/>
            <person name="Silva J.C."/>
            <person name="Badger J.H."/>
            <person name="Albarraq A."/>
            <person name="Angiuoli S."/>
            <person name="Bussey H."/>
            <person name="Bowyer P."/>
            <person name="Cotty P.J."/>
            <person name="Dyer P.S."/>
            <person name="Egan A."/>
            <person name="Galens K."/>
            <person name="Fraser-Liggett C.M."/>
            <person name="Haas B.J."/>
            <person name="Inman J.M."/>
            <person name="Kent R."/>
            <person name="Lemieux S."/>
            <person name="Malavazi I."/>
            <person name="Orvis J."/>
            <person name="Roemer T."/>
            <person name="Ronning C.M."/>
            <person name="Sundaram J.P."/>
            <person name="Sutton G."/>
            <person name="Turner G."/>
            <person name="Venter J.C."/>
            <person name="White O.R."/>
            <person name="Whitty B.R."/>
            <person name="Youngman P."/>
            <person name="Wolfe K.H."/>
            <person name="Goldman G.H."/>
            <person name="Wortman J.R."/>
            <person name="Jiang B."/>
            <person name="Denning D.W."/>
            <person name="Nierman W.C."/>
        </authorList>
    </citation>
    <scope>NUCLEOTIDE SEQUENCE [LARGE SCALE GENOMIC DNA]</scope>
    <source>
        <strain>ATCC 1020 / DSM 3700 / CBS 544.65 / FGSC A1164 / JCM 1740 / NRRL 181 / WB 181</strain>
    </source>
</reference>
<dbReference type="EMBL" id="DS027690">
    <property type="protein sequence ID" value="EAW21734.1"/>
    <property type="status" value="ALT_SEQ"/>
    <property type="molecule type" value="Genomic_DNA"/>
</dbReference>
<dbReference type="RefSeq" id="XP_001263631.1">
    <property type="nucleotide sequence ID" value="XM_001263630.1"/>
</dbReference>
<dbReference type="SMR" id="A1D7P0"/>
<dbReference type="STRING" id="331117.A1D7P0"/>
<dbReference type="GeneID" id="4590277"/>
<dbReference type="KEGG" id="nfi:NFIA_069050"/>
<dbReference type="VEuPathDB" id="FungiDB:NFIA_069050"/>
<dbReference type="eggNOG" id="KOG3163">
    <property type="taxonomic scope" value="Eukaryota"/>
</dbReference>
<dbReference type="OrthoDB" id="1847590at2759"/>
<dbReference type="Proteomes" id="UP000006702">
    <property type="component" value="Unassembled WGS sequence"/>
</dbReference>
<dbReference type="GO" id="GO:0005730">
    <property type="term" value="C:nucleolus"/>
    <property type="evidence" value="ECO:0007669"/>
    <property type="project" value="UniProtKB-SubCell"/>
</dbReference>
<dbReference type="GO" id="GO:0030687">
    <property type="term" value="C:preribosome, large subunit precursor"/>
    <property type="evidence" value="ECO:0007669"/>
    <property type="project" value="EnsemblFungi"/>
</dbReference>
<dbReference type="GO" id="GO:0000466">
    <property type="term" value="P:maturation of 5.8S rRNA from tricistronic rRNA transcript (SSU-rRNA, 5.8S rRNA, LSU-rRNA)"/>
    <property type="evidence" value="ECO:0007669"/>
    <property type="project" value="EnsemblFungi"/>
</dbReference>
<dbReference type="GO" id="GO:0000463">
    <property type="term" value="P:maturation of LSU-rRNA from tricistronic rRNA transcript (SSU-rRNA, 5.8S rRNA, LSU-rRNA)"/>
    <property type="evidence" value="ECO:0007669"/>
    <property type="project" value="EnsemblFungi"/>
</dbReference>
<dbReference type="CDD" id="cd11381">
    <property type="entry name" value="NSA2"/>
    <property type="match status" value="1"/>
</dbReference>
<dbReference type="FunFam" id="2.40.10.310:FF:000001">
    <property type="entry name" value="NSA2, ribosome biogenesis homolog"/>
    <property type="match status" value="1"/>
</dbReference>
<dbReference type="Gene3D" id="2.40.10.310">
    <property type="match status" value="1"/>
</dbReference>
<dbReference type="InterPro" id="IPR039411">
    <property type="entry name" value="NSA2_fam"/>
</dbReference>
<dbReference type="InterPro" id="IPR022309">
    <property type="entry name" value="Ribosomal_Se8/biogenesis_NSA2"/>
</dbReference>
<dbReference type="PANTHER" id="PTHR12642">
    <property type="entry name" value="RIBOSOME BIOGENESIS PROTEIN NSA2 HOMOLOG"/>
    <property type="match status" value="1"/>
</dbReference>
<dbReference type="Pfam" id="PF01201">
    <property type="entry name" value="Ribosomal_S8e"/>
    <property type="match status" value="1"/>
</dbReference>
<organism>
    <name type="scientific">Neosartorya fischeri (strain ATCC 1020 / DSM 3700 / CBS 544.65 / FGSC A1164 / JCM 1740 / NRRL 181 / WB 181)</name>
    <name type="common">Aspergillus fischerianus</name>
    <dbReference type="NCBI Taxonomy" id="331117"/>
    <lineage>
        <taxon>Eukaryota</taxon>
        <taxon>Fungi</taxon>
        <taxon>Dikarya</taxon>
        <taxon>Ascomycota</taxon>
        <taxon>Pezizomycotina</taxon>
        <taxon>Eurotiomycetes</taxon>
        <taxon>Eurotiomycetidae</taxon>
        <taxon>Eurotiales</taxon>
        <taxon>Aspergillaceae</taxon>
        <taxon>Aspergillus</taxon>
        <taxon>Aspergillus subgen. Fumigati</taxon>
    </lineage>
</organism>